<proteinExistence type="inferred from homology"/>
<reference key="1">
    <citation type="journal article" date="2010" name="J. Bacteriol.">
        <title>Complete genome sequence of Beijerinckia indica subsp. indica.</title>
        <authorList>
            <person name="Tamas I."/>
            <person name="Dedysh S.N."/>
            <person name="Liesack W."/>
            <person name="Stott M.B."/>
            <person name="Alam M."/>
            <person name="Murrell J.C."/>
            <person name="Dunfield P.F."/>
        </authorList>
    </citation>
    <scope>NUCLEOTIDE SEQUENCE [LARGE SCALE GENOMIC DNA]</scope>
    <source>
        <strain>ATCC 9039 / DSM 1715 / NCIMB 8712</strain>
    </source>
</reference>
<name>AHPD_BEII9</name>
<comment type="function">
    <text evidence="2">Antioxidant protein with alkyl hydroperoxidase activity. Required for the reduction of the AhpC active site cysteine residues and for the regeneration of the AhpC enzyme activity.</text>
</comment>
<comment type="catalytic activity">
    <reaction evidence="2">
        <text>N(6)-[(R)-dihydrolipoyl]-L-lysyl-[lipoyl-carrier protein] + a hydroperoxide = N(6)-[(R)-lipoyl]-L-lysyl-[lipoyl-carrier protein] + an alcohol + H2O</text>
        <dbReference type="Rhea" id="RHEA:62636"/>
        <dbReference type="Rhea" id="RHEA-COMP:10502"/>
        <dbReference type="Rhea" id="RHEA-COMP:16355"/>
        <dbReference type="ChEBI" id="CHEBI:15377"/>
        <dbReference type="ChEBI" id="CHEBI:30879"/>
        <dbReference type="ChEBI" id="CHEBI:35924"/>
        <dbReference type="ChEBI" id="CHEBI:83099"/>
        <dbReference type="ChEBI" id="CHEBI:83100"/>
        <dbReference type="EC" id="1.11.1.28"/>
    </reaction>
</comment>
<comment type="similarity">
    <text evidence="2">Belongs to the AhpD family.</text>
</comment>
<evidence type="ECO:0000250" key="1"/>
<evidence type="ECO:0000255" key="2">
    <source>
        <dbReference type="HAMAP-Rule" id="MF_01676"/>
    </source>
</evidence>
<feature type="chain" id="PRO_0000359472" description="Alkyl hydroperoxide reductase AhpD">
    <location>
        <begin position="1"/>
        <end position="180"/>
    </location>
</feature>
<feature type="active site" description="Proton donor" evidence="2">
    <location>
        <position position="131"/>
    </location>
</feature>
<feature type="active site" description="Cysteine sulfenic acid (-SOH) intermediate" evidence="2">
    <location>
        <position position="134"/>
    </location>
</feature>
<feature type="disulfide bond" evidence="1">
    <location>
        <begin position="131"/>
        <end position="134"/>
    </location>
</feature>
<feature type="disulfide bond" description="Interchain (with AhpC); in linked form" evidence="2">
    <location>
        <position position="134"/>
    </location>
</feature>
<keyword id="KW-0049">Antioxidant</keyword>
<keyword id="KW-1015">Disulfide bond</keyword>
<keyword id="KW-0560">Oxidoreductase</keyword>
<keyword id="KW-0575">Peroxidase</keyword>
<keyword id="KW-0676">Redox-active center</keyword>
<keyword id="KW-1185">Reference proteome</keyword>
<organism>
    <name type="scientific">Beijerinckia indica subsp. indica (strain ATCC 9039 / DSM 1715 / NCIMB 8712)</name>
    <dbReference type="NCBI Taxonomy" id="395963"/>
    <lineage>
        <taxon>Bacteria</taxon>
        <taxon>Pseudomonadati</taxon>
        <taxon>Pseudomonadota</taxon>
        <taxon>Alphaproteobacteria</taxon>
        <taxon>Hyphomicrobiales</taxon>
        <taxon>Beijerinckiaceae</taxon>
        <taxon>Beijerinckia</taxon>
    </lineage>
</organism>
<gene>
    <name evidence="2" type="primary">ahpD</name>
    <name type="ordered locus">Bind_2431</name>
</gene>
<protein>
    <recommendedName>
        <fullName evidence="2">Alkyl hydroperoxide reductase AhpD</fullName>
        <ecNumber evidence="2">1.11.1.28</ecNumber>
    </recommendedName>
    <alternativeName>
        <fullName evidence="2">Alkylhydroperoxidase AhpD</fullName>
    </alternativeName>
</protein>
<sequence>MSIDSLKDKLPDFAKDVRLNLSNIANDDTLGEQTKYGLMLACAVATRNAEVLKAFDQECTPHLAPAARDAALAAATIMAMNNVYYRFVHLASNKAYGTLPAKLRMNIIGNPGVPKTDFELWSLAVSAINGCGMCIDSHEKVLLNADTTQDTIQTAVRFAAIIQSTAVALEAASLPVSAAS</sequence>
<dbReference type="EC" id="1.11.1.28" evidence="2"/>
<dbReference type="EMBL" id="CP001016">
    <property type="protein sequence ID" value="ACB96040.1"/>
    <property type="molecule type" value="Genomic_DNA"/>
</dbReference>
<dbReference type="RefSeq" id="WP_012385393.1">
    <property type="nucleotide sequence ID" value="NC_010581.1"/>
</dbReference>
<dbReference type="SMR" id="B2IHZ4"/>
<dbReference type="KEGG" id="bid:Bind_2431"/>
<dbReference type="eggNOG" id="COG2128">
    <property type="taxonomic scope" value="Bacteria"/>
</dbReference>
<dbReference type="HOGENOM" id="CLU_105328_0_0_5"/>
<dbReference type="OrthoDB" id="9801997at2"/>
<dbReference type="Proteomes" id="UP000001695">
    <property type="component" value="Chromosome"/>
</dbReference>
<dbReference type="GO" id="GO:0008785">
    <property type="term" value="F:alkyl hydroperoxide reductase activity"/>
    <property type="evidence" value="ECO:0007669"/>
    <property type="project" value="UniProtKB-UniRule"/>
</dbReference>
<dbReference type="GO" id="GO:0015036">
    <property type="term" value="F:disulfide oxidoreductase activity"/>
    <property type="evidence" value="ECO:0007669"/>
    <property type="project" value="TreeGrafter"/>
</dbReference>
<dbReference type="GO" id="GO:0032843">
    <property type="term" value="F:hydroperoxide reductase activity"/>
    <property type="evidence" value="ECO:0007669"/>
    <property type="project" value="InterPro"/>
</dbReference>
<dbReference type="GO" id="GO:0051920">
    <property type="term" value="F:peroxiredoxin activity"/>
    <property type="evidence" value="ECO:0007669"/>
    <property type="project" value="InterPro"/>
</dbReference>
<dbReference type="GO" id="GO:0045454">
    <property type="term" value="P:cell redox homeostasis"/>
    <property type="evidence" value="ECO:0007669"/>
    <property type="project" value="TreeGrafter"/>
</dbReference>
<dbReference type="GO" id="GO:0006979">
    <property type="term" value="P:response to oxidative stress"/>
    <property type="evidence" value="ECO:0007669"/>
    <property type="project" value="InterPro"/>
</dbReference>
<dbReference type="Gene3D" id="1.20.1290.10">
    <property type="entry name" value="AhpD-like"/>
    <property type="match status" value="1"/>
</dbReference>
<dbReference type="HAMAP" id="MF_01676">
    <property type="entry name" value="AhpD"/>
    <property type="match status" value="1"/>
</dbReference>
<dbReference type="InterPro" id="IPR004674">
    <property type="entry name" value="AhpD"/>
</dbReference>
<dbReference type="InterPro" id="IPR029032">
    <property type="entry name" value="AhpD-like"/>
</dbReference>
<dbReference type="InterPro" id="IPR004675">
    <property type="entry name" value="AhpD_core"/>
</dbReference>
<dbReference type="InterPro" id="IPR003779">
    <property type="entry name" value="CMD-like"/>
</dbReference>
<dbReference type="NCBIfam" id="TIGR00777">
    <property type="entry name" value="ahpD"/>
    <property type="match status" value="1"/>
</dbReference>
<dbReference type="NCBIfam" id="TIGR00778">
    <property type="entry name" value="ahpD_dom"/>
    <property type="match status" value="1"/>
</dbReference>
<dbReference type="PANTHER" id="PTHR33930">
    <property type="entry name" value="ALKYL HYDROPEROXIDE REDUCTASE AHPD"/>
    <property type="match status" value="1"/>
</dbReference>
<dbReference type="PANTHER" id="PTHR33930:SF7">
    <property type="entry name" value="ALKYL HYDROPEROXIDE REDUCTASE AHPD"/>
    <property type="match status" value="1"/>
</dbReference>
<dbReference type="Pfam" id="PF02627">
    <property type="entry name" value="CMD"/>
    <property type="match status" value="1"/>
</dbReference>
<dbReference type="SUPFAM" id="SSF69118">
    <property type="entry name" value="AhpD-like"/>
    <property type="match status" value="1"/>
</dbReference>
<accession>B2IHZ4</accession>